<dbReference type="EMBL" id="CP000563">
    <property type="protein sequence ID" value="ABN61377.1"/>
    <property type="molecule type" value="Genomic_DNA"/>
</dbReference>
<dbReference type="RefSeq" id="WP_006081366.1">
    <property type="nucleotide sequence ID" value="NC_009052.1"/>
</dbReference>
<dbReference type="STRING" id="325240.Sbal_1871"/>
<dbReference type="KEGG" id="sbl:Sbal_1871"/>
<dbReference type="HOGENOM" id="CLU_109769_0_1_6"/>
<dbReference type="OrthoDB" id="9786855at2"/>
<dbReference type="Proteomes" id="UP000001557">
    <property type="component" value="Chromosome"/>
</dbReference>
<dbReference type="HAMAP" id="MF_00676">
    <property type="entry name" value="UPF0260"/>
    <property type="match status" value="1"/>
</dbReference>
<dbReference type="InterPro" id="IPR005358">
    <property type="entry name" value="Puta_zinc/iron-chelating_dom"/>
</dbReference>
<dbReference type="InterPro" id="IPR008228">
    <property type="entry name" value="UCP006173"/>
</dbReference>
<dbReference type="NCBIfam" id="NF003500">
    <property type="entry name" value="PRK05170.1-4"/>
    <property type="match status" value="1"/>
</dbReference>
<dbReference type="NCBIfam" id="NF003501">
    <property type="entry name" value="PRK05170.1-5"/>
    <property type="match status" value="1"/>
</dbReference>
<dbReference type="NCBIfam" id="NF003507">
    <property type="entry name" value="PRK05170.2-5"/>
    <property type="match status" value="1"/>
</dbReference>
<dbReference type="PANTHER" id="PTHR37421">
    <property type="entry name" value="UPF0260 PROTEIN YCGN"/>
    <property type="match status" value="1"/>
</dbReference>
<dbReference type="PANTHER" id="PTHR37421:SF1">
    <property type="entry name" value="UPF0260 PROTEIN YCGN"/>
    <property type="match status" value="1"/>
</dbReference>
<dbReference type="Pfam" id="PF03692">
    <property type="entry name" value="CxxCxxCC"/>
    <property type="match status" value="1"/>
</dbReference>
<dbReference type="PIRSF" id="PIRSF006173">
    <property type="entry name" value="UCP006173"/>
    <property type="match status" value="1"/>
</dbReference>
<gene>
    <name type="ordered locus">Sbal_1871</name>
</gene>
<organism>
    <name type="scientific">Shewanella baltica (strain OS155 / ATCC BAA-1091)</name>
    <dbReference type="NCBI Taxonomy" id="325240"/>
    <lineage>
        <taxon>Bacteria</taxon>
        <taxon>Pseudomonadati</taxon>
        <taxon>Pseudomonadota</taxon>
        <taxon>Gammaproteobacteria</taxon>
        <taxon>Alteromonadales</taxon>
        <taxon>Shewanellaceae</taxon>
        <taxon>Shewanella</taxon>
    </lineage>
</organism>
<name>Y1871_SHEB5</name>
<protein>
    <recommendedName>
        <fullName evidence="1">UPF0260 protein Sbal_1871</fullName>
    </recommendedName>
</protein>
<comment type="similarity">
    <text evidence="1">Belongs to the UPF0260 family.</text>
</comment>
<accession>A3D3R4</accession>
<sequence length="146" mass="16594">MAFWQSKTLAQMSATEWESLCDGCGKCCLNKLIDDETEDLYYTNAACLLLDHQTAGCQHYSDRFTHVPQCTVITIDNIHELTWLPDSCAYRRLAAGRELPSWHPLLTGSKEAMHLAGMSIQGKVVDERRVKDIEDHIVLWPLKDVD</sequence>
<feature type="chain" id="PRO_1000044810" description="UPF0260 protein Sbal_1871">
    <location>
        <begin position="1"/>
        <end position="146"/>
    </location>
</feature>
<evidence type="ECO:0000255" key="1">
    <source>
        <dbReference type="HAMAP-Rule" id="MF_00676"/>
    </source>
</evidence>
<reference key="1">
    <citation type="submission" date="2007-02" db="EMBL/GenBank/DDBJ databases">
        <title>Complete sequence of chromosome of Shewanella baltica OS155.</title>
        <authorList>
            <consortium name="US DOE Joint Genome Institute"/>
            <person name="Copeland A."/>
            <person name="Lucas S."/>
            <person name="Lapidus A."/>
            <person name="Barry K."/>
            <person name="Detter J.C."/>
            <person name="Glavina del Rio T."/>
            <person name="Hammon N."/>
            <person name="Israni S."/>
            <person name="Dalin E."/>
            <person name="Tice H."/>
            <person name="Pitluck S."/>
            <person name="Sims D.R."/>
            <person name="Brettin T."/>
            <person name="Bruce D."/>
            <person name="Han C."/>
            <person name="Tapia R."/>
            <person name="Brainard J."/>
            <person name="Schmutz J."/>
            <person name="Larimer F."/>
            <person name="Land M."/>
            <person name="Hauser L."/>
            <person name="Kyrpides N."/>
            <person name="Mikhailova N."/>
            <person name="Brettar I."/>
            <person name="Klappenbach J."/>
            <person name="Konstantinidis K."/>
            <person name="Rodrigues J."/>
            <person name="Tiedje J."/>
            <person name="Richardson P."/>
        </authorList>
    </citation>
    <scope>NUCLEOTIDE SEQUENCE [LARGE SCALE GENOMIC DNA]</scope>
    <source>
        <strain>OS155 / ATCC BAA-1091</strain>
    </source>
</reference>
<keyword id="KW-1185">Reference proteome</keyword>
<proteinExistence type="inferred from homology"/>